<proteinExistence type="inferred from homology"/>
<dbReference type="EC" id="2.1.2.1" evidence="1"/>
<dbReference type="EMBL" id="AP009247">
    <property type="protein sequence ID" value="BAF61700.1"/>
    <property type="molecule type" value="Genomic_DNA"/>
</dbReference>
<dbReference type="RefSeq" id="WP_011929970.1">
    <property type="nucleotide sequence ID" value="NC_009465.1"/>
</dbReference>
<dbReference type="SMR" id="A5CWI3"/>
<dbReference type="STRING" id="412965.COSY_0584"/>
<dbReference type="KEGG" id="vok:COSY_0584"/>
<dbReference type="eggNOG" id="COG0112">
    <property type="taxonomic scope" value="Bacteria"/>
</dbReference>
<dbReference type="HOGENOM" id="CLU_022477_2_1_6"/>
<dbReference type="OrthoDB" id="9803846at2"/>
<dbReference type="UniPathway" id="UPA00193"/>
<dbReference type="UniPathway" id="UPA00288">
    <property type="reaction ID" value="UER01023"/>
</dbReference>
<dbReference type="Proteomes" id="UP000000247">
    <property type="component" value="Chromosome"/>
</dbReference>
<dbReference type="GO" id="GO:0005829">
    <property type="term" value="C:cytosol"/>
    <property type="evidence" value="ECO:0007669"/>
    <property type="project" value="TreeGrafter"/>
</dbReference>
<dbReference type="GO" id="GO:0004372">
    <property type="term" value="F:glycine hydroxymethyltransferase activity"/>
    <property type="evidence" value="ECO:0007669"/>
    <property type="project" value="UniProtKB-UniRule"/>
</dbReference>
<dbReference type="GO" id="GO:0030170">
    <property type="term" value="F:pyridoxal phosphate binding"/>
    <property type="evidence" value="ECO:0007669"/>
    <property type="project" value="UniProtKB-UniRule"/>
</dbReference>
<dbReference type="GO" id="GO:0019264">
    <property type="term" value="P:glycine biosynthetic process from serine"/>
    <property type="evidence" value="ECO:0007669"/>
    <property type="project" value="UniProtKB-UniRule"/>
</dbReference>
<dbReference type="GO" id="GO:0035999">
    <property type="term" value="P:tetrahydrofolate interconversion"/>
    <property type="evidence" value="ECO:0007669"/>
    <property type="project" value="UniProtKB-UniRule"/>
</dbReference>
<dbReference type="CDD" id="cd00378">
    <property type="entry name" value="SHMT"/>
    <property type="match status" value="1"/>
</dbReference>
<dbReference type="FunFam" id="3.40.640.10:FF:000001">
    <property type="entry name" value="Serine hydroxymethyltransferase"/>
    <property type="match status" value="1"/>
</dbReference>
<dbReference type="FunFam" id="3.90.1150.10:FF:000003">
    <property type="entry name" value="Serine hydroxymethyltransferase"/>
    <property type="match status" value="1"/>
</dbReference>
<dbReference type="Gene3D" id="3.90.1150.10">
    <property type="entry name" value="Aspartate Aminotransferase, domain 1"/>
    <property type="match status" value="1"/>
</dbReference>
<dbReference type="Gene3D" id="3.40.640.10">
    <property type="entry name" value="Type I PLP-dependent aspartate aminotransferase-like (Major domain)"/>
    <property type="match status" value="1"/>
</dbReference>
<dbReference type="HAMAP" id="MF_00051">
    <property type="entry name" value="SHMT"/>
    <property type="match status" value="1"/>
</dbReference>
<dbReference type="InterPro" id="IPR015424">
    <property type="entry name" value="PyrdxlP-dep_Trfase"/>
</dbReference>
<dbReference type="InterPro" id="IPR015421">
    <property type="entry name" value="PyrdxlP-dep_Trfase_major"/>
</dbReference>
<dbReference type="InterPro" id="IPR015422">
    <property type="entry name" value="PyrdxlP-dep_Trfase_small"/>
</dbReference>
<dbReference type="InterPro" id="IPR001085">
    <property type="entry name" value="Ser_HO-MeTrfase"/>
</dbReference>
<dbReference type="InterPro" id="IPR049943">
    <property type="entry name" value="Ser_HO-MeTrfase-like"/>
</dbReference>
<dbReference type="InterPro" id="IPR019798">
    <property type="entry name" value="Ser_HO-MeTrfase_PLP_BS"/>
</dbReference>
<dbReference type="InterPro" id="IPR039429">
    <property type="entry name" value="SHMT-like_dom"/>
</dbReference>
<dbReference type="NCBIfam" id="NF000586">
    <property type="entry name" value="PRK00011.1"/>
    <property type="match status" value="1"/>
</dbReference>
<dbReference type="PANTHER" id="PTHR11680">
    <property type="entry name" value="SERINE HYDROXYMETHYLTRANSFERASE"/>
    <property type="match status" value="1"/>
</dbReference>
<dbReference type="PANTHER" id="PTHR11680:SF50">
    <property type="entry name" value="SERINE HYDROXYMETHYLTRANSFERASE"/>
    <property type="match status" value="1"/>
</dbReference>
<dbReference type="Pfam" id="PF00464">
    <property type="entry name" value="SHMT"/>
    <property type="match status" value="1"/>
</dbReference>
<dbReference type="PIRSF" id="PIRSF000412">
    <property type="entry name" value="SHMT"/>
    <property type="match status" value="1"/>
</dbReference>
<dbReference type="SUPFAM" id="SSF53383">
    <property type="entry name" value="PLP-dependent transferases"/>
    <property type="match status" value="1"/>
</dbReference>
<dbReference type="PROSITE" id="PS00096">
    <property type="entry name" value="SHMT"/>
    <property type="match status" value="1"/>
</dbReference>
<protein>
    <recommendedName>
        <fullName evidence="1">Serine hydroxymethyltransferase</fullName>
        <shortName evidence="1">SHMT</shortName>
        <shortName evidence="1">Serine methylase</shortName>
        <ecNumber evidence="1">2.1.2.1</ecNumber>
    </recommendedName>
</protein>
<reference key="1">
    <citation type="journal article" date="2007" name="Curr. Biol.">
        <title>Reduced genome of the thioautotrophic intracellular symbiont in a deep-sea clam, Calyptogena okutanii.</title>
        <authorList>
            <person name="Kuwahara H."/>
            <person name="Yoshida T."/>
            <person name="Takaki Y."/>
            <person name="Shimamura S."/>
            <person name="Nishi S."/>
            <person name="Harada M."/>
            <person name="Matsuyama K."/>
            <person name="Takishita K."/>
            <person name="Kawato M."/>
            <person name="Uematsu K."/>
            <person name="Fujiwara Y."/>
            <person name="Sato T."/>
            <person name="Kato C."/>
            <person name="Kitagawa M."/>
            <person name="Kato I."/>
            <person name="Maruyama T."/>
        </authorList>
    </citation>
    <scope>NUCLEOTIDE SEQUENCE [LARGE SCALE GENOMIC DNA]</scope>
    <source>
        <strain>HA</strain>
    </source>
</reference>
<keyword id="KW-0028">Amino-acid biosynthesis</keyword>
<keyword id="KW-0963">Cytoplasm</keyword>
<keyword id="KW-0554">One-carbon metabolism</keyword>
<keyword id="KW-0663">Pyridoxal phosphate</keyword>
<keyword id="KW-1185">Reference proteome</keyword>
<keyword id="KW-0808">Transferase</keyword>
<gene>
    <name evidence="1" type="primary">glyA</name>
    <name type="ordered locus">COSY_0584</name>
</gene>
<comment type="function">
    <text evidence="1">Catalyzes the reversible interconversion of serine and glycine with tetrahydrofolate (THF) serving as the one-carbon carrier. This reaction serves as the major source of one-carbon groups required for the biosynthesis of purines, thymidylate, methionine, and other important biomolecules. Also exhibits THF-independent aldolase activity toward beta-hydroxyamino acids, producing glycine and aldehydes, via a retro-aldol mechanism.</text>
</comment>
<comment type="catalytic activity">
    <reaction evidence="1">
        <text>(6R)-5,10-methylene-5,6,7,8-tetrahydrofolate + glycine + H2O = (6S)-5,6,7,8-tetrahydrofolate + L-serine</text>
        <dbReference type="Rhea" id="RHEA:15481"/>
        <dbReference type="ChEBI" id="CHEBI:15377"/>
        <dbReference type="ChEBI" id="CHEBI:15636"/>
        <dbReference type="ChEBI" id="CHEBI:33384"/>
        <dbReference type="ChEBI" id="CHEBI:57305"/>
        <dbReference type="ChEBI" id="CHEBI:57453"/>
        <dbReference type="EC" id="2.1.2.1"/>
    </reaction>
</comment>
<comment type="cofactor">
    <cofactor evidence="1">
        <name>pyridoxal 5'-phosphate</name>
        <dbReference type="ChEBI" id="CHEBI:597326"/>
    </cofactor>
</comment>
<comment type="pathway">
    <text evidence="1">One-carbon metabolism; tetrahydrofolate interconversion.</text>
</comment>
<comment type="pathway">
    <text evidence="1">Amino-acid biosynthesis; glycine biosynthesis; glycine from L-serine: step 1/1.</text>
</comment>
<comment type="subunit">
    <text evidence="1">Homodimer.</text>
</comment>
<comment type="subcellular location">
    <subcellularLocation>
        <location evidence="1">Cytoplasm</location>
    </subcellularLocation>
</comment>
<comment type="similarity">
    <text evidence="1">Belongs to the SHMT family.</text>
</comment>
<sequence>MFDKSQTLAKVDAEIYKAIVLEETRQETHIELIASENYTSPAVMETQGSKLTNKYAEGYPCKRYYGGCEYVDMVEQLAIDRAKTLFGADYANVQPHSGSQANAAVFQALLVPGDTILGMSLAHGGHLTHGATPSFSGKNFNSIQYGLNQKTGEIDYEQVEVLAKRYKPKMIIAGFSAYSRMVDWQRFREIADSVGAYLMVDMAHVAGLIATGEYPSPVAIADVTTTTTHKTLRGPRGGLILAKSNKTIEKKLNAAIFPGIQGGPLMHIIAAKAVSFKEAMSDEYKTYQKQVKINAQVMANTFIKRGFDVVSGGTDNHLFLVSFIDQGLTGKAVDTALGSAYITVNMNAVPNDPNPPFVTSGIRVGTPSVTTRGFNEIDCSDLASWMCDICDDLGNQEVIYKIRGRVVSLCAKYPVYLDD</sequence>
<name>GLYA_VESOH</name>
<accession>A5CWI3</accession>
<feature type="chain" id="PRO_1000006342" description="Serine hydroxymethyltransferase">
    <location>
        <begin position="1"/>
        <end position="419"/>
    </location>
</feature>
<feature type="binding site" evidence="1">
    <location>
        <position position="121"/>
    </location>
    <ligand>
        <name>(6S)-5,6,7,8-tetrahydrofolate</name>
        <dbReference type="ChEBI" id="CHEBI:57453"/>
    </ligand>
</feature>
<feature type="binding site" evidence="1">
    <location>
        <begin position="125"/>
        <end position="127"/>
    </location>
    <ligand>
        <name>(6S)-5,6,7,8-tetrahydrofolate</name>
        <dbReference type="ChEBI" id="CHEBI:57453"/>
    </ligand>
</feature>
<feature type="site" description="Plays an important role in substrate specificity" evidence="1">
    <location>
        <position position="229"/>
    </location>
</feature>
<feature type="modified residue" description="N6-(pyridoxal phosphate)lysine" evidence="1">
    <location>
        <position position="230"/>
    </location>
</feature>
<evidence type="ECO:0000255" key="1">
    <source>
        <dbReference type="HAMAP-Rule" id="MF_00051"/>
    </source>
</evidence>
<organism>
    <name type="scientific">Vesicomyosocius okutanii subsp. Calyptogena okutanii (strain HA)</name>
    <dbReference type="NCBI Taxonomy" id="412965"/>
    <lineage>
        <taxon>Bacteria</taxon>
        <taxon>Pseudomonadati</taxon>
        <taxon>Pseudomonadota</taxon>
        <taxon>Gammaproteobacteria</taxon>
        <taxon>Candidatus Pseudothioglobaceae</taxon>
        <taxon>Candidatus Vesicomyosocius</taxon>
    </lineage>
</organism>